<proteinExistence type="inferred from homology"/>
<dbReference type="EC" id="4.6.1.12" evidence="1"/>
<dbReference type="EMBL" id="CU928162">
    <property type="protein sequence ID" value="CAR09364.2"/>
    <property type="molecule type" value="Genomic_DNA"/>
</dbReference>
<dbReference type="RefSeq" id="WP_001219237.1">
    <property type="nucleotide sequence ID" value="NC_011745.1"/>
</dbReference>
<dbReference type="SMR" id="B7MZ47"/>
<dbReference type="KEGG" id="ecq:ECED1_3202"/>
<dbReference type="HOGENOM" id="CLU_084630_2_0_6"/>
<dbReference type="UniPathway" id="UPA00056">
    <property type="reaction ID" value="UER00095"/>
</dbReference>
<dbReference type="Proteomes" id="UP000000748">
    <property type="component" value="Chromosome"/>
</dbReference>
<dbReference type="GO" id="GO:0008685">
    <property type="term" value="F:2-C-methyl-D-erythritol 2,4-cyclodiphosphate synthase activity"/>
    <property type="evidence" value="ECO:0007669"/>
    <property type="project" value="UniProtKB-UniRule"/>
</dbReference>
<dbReference type="GO" id="GO:0046872">
    <property type="term" value="F:metal ion binding"/>
    <property type="evidence" value="ECO:0007669"/>
    <property type="project" value="UniProtKB-KW"/>
</dbReference>
<dbReference type="GO" id="GO:0019288">
    <property type="term" value="P:isopentenyl diphosphate biosynthetic process, methylerythritol 4-phosphate pathway"/>
    <property type="evidence" value="ECO:0007669"/>
    <property type="project" value="UniProtKB-UniRule"/>
</dbReference>
<dbReference type="GO" id="GO:0016114">
    <property type="term" value="P:terpenoid biosynthetic process"/>
    <property type="evidence" value="ECO:0007669"/>
    <property type="project" value="InterPro"/>
</dbReference>
<dbReference type="CDD" id="cd00554">
    <property type="entry name" value="MECDP_synthase"/>
    <property type="match status" value="1"/>
</dbReference>
<dbReference type="FunFam" id="3.30.1330.50:FF:000001">
    <property type="entry name" value="2-C-methyl-D-erythritol 2,4-cyclodiphosphate synthase"/>
    <property type="match status" value="1"/>
</dbReference>
<dbReference type="Gene3D" id="3.30.1330.50">
    <property type="entry name" value="2-C-methyl-D-erythritol 2,4-cyclodiphosphate synthase"/>
    <property type="match status" value="1"/>
</dbReference>
<dbReference type="HAMAP" id="MF_00107">
    <property type="entry name" value="IspF"/>
    <property type="match status" value="1"/>
</dbReference>
<dbReference type="InterPro" id="IPR003526">
    <property type="entry name" value="MECDP_synthase"/>
</dbReference>
<dbReference type="InterPro" id="IPR020555">
    <property type="entry name" value="MECDP_synthase_CS"/>
</dbReference>
<dbReference type="InterPro" id="IPR036571">
    <property type="entry name" value="MECDP_synthase_sf"/>
</dbReference>
<dbReference type="NCBIfam" id="TIGR00151">
    <property type="entry name" value="ispF"/>
    <property type="match status" value="1"/>
</dbReference>
<dbReference type="PANTHER" id="PTHR43181">
    <property type="entry name" value="2-C-METHYL-D-ERYTHRITOL 2,4-CYCLODIPHOSPHATE SYNTHASE, CHLOROPLASTIC"/>
    <property type="match status" value="1"/>
</dbReference>
<dbReference type="PANTHER" id="PTHR43181:SF1">
    <property type="entry name" value="2-C-METHYL-D-ERYTHRITOL 2,4-CYCLODIPHOSPHATE SYNTHASE, CHLOROPLASTIC"/>
    <property type="match status" value="1"/>
</dbReference>
<dbReference type="Pfam" id="PF02542">
    <property type="entry name" value="YgbB"/>
    <property type="match status" value="1"/>
</dbReference>
<dbReference type="SUPFAM" id="SSF69765">
    <property type="entry name" value="IpsF-like"/>
    <property type="match status" value="1"/>
</dbReference>
<dbReference type="PROSITE" id="PS01350">
    <property type="entry name" value="ISPF"/>
    <property type="match status" value="1"/>
</dbReference>
<reference key="1">
    <citation type="journal article" date="2009" name="PLoS Genet.">
        <title>Organised genome dynamics in the Escherichia coli species results in highly diverse adaptive paths.</title>
        <authorList>
            <person name="Touchon M."/>
            <person name="Hoede C."/>
            <person name="Tenaillon O."/>
            <person name="Barbe V."/>
            <person name="Baeriswyl S."/>
            <person name="Bidet P."/>
            <person name="Bingen E."/>
            <person name="Bonacorsi S."/>
            <person name="Bouchier C."/>
            <person name="Bouvet O."/>
            <person name="Calteau A."/>
            <person name="Chiapello H."/>
            <person name="Clermont O."/>
            <person name="Cruveiller S."/>
            <person name="Danchin A."/>
            <person name="Diard M."/>
            <person name="Dossat C."/>
            <person name="Karoui M.E."/>
            <person name="Frapy E."/>
            <person name="Garry L."/>
            <person name="Ghigo J.M."/>
            <person name="Gilles A.M."/>
            <person name="Johnson J."/>
            <person name="Le Bouguenec C."/>
            <person name="Lescat M."/>
            <person name="Mangenot S."/>
            <person name="Martinez-Jehanne V."/>
            <person name="Matic I."/>
            <person name="Nassif X."/>
            <person name="Oztas S."/>
            <person name="Petit M.A."/>
            <person name="Pichon C."/>
            <person name="Rouy Z."/>
            <person name="Ruf C.S."/>
            <person name="Schneider D."/>
            <person name="Tourret J."/>
            <person name="Vacherie B."/>
            <person name="Vallenet D."/>
            <person name="Medigue C."/>
            <person name="Rocha E.P.C."/>
            <person name="Denamur E."/>
        </authorList>
    </citation>
    <scope>NUCLEOTIDE SEQUENCE [LARGE SCALE GENOMIC DNA]</scope>
    <source>
        <strain>ED1a</strain>
    </source>
</reference>
<evidence type="ECO:0000255" key="1">
    <source>
        <dbReference type="HAMAP-Rule" id="MF_00107"/>
    </source>
</evidence>
<gene>
    <name evidence="1" type="primary">ispF</name>
    <name type="ordered locus">ECED1_3202</name>
</gene>
<comment type="function">
    <text evidence="1">Involved in the biosynthesis of isopentenyl diphosphate (IPP) and dimethylallyl diphosphate (DMAPP), two major building blocks of isoprenoid compounds. Catalyzes the conversion of 4-diphosphocytidyl-2-C-methyl-D-erythritol 2-phosphate (CDP-ME2P) to 2-C-methyl-D-erythritol 2,4-cyclodiphosphate (ME-CPP) with a corresponding release of cytidine 5-monophosphate (CMP).</text>
</comment>
<comment type="catalytic activity">
    <reaction evidence="1">
        <text>4-CDP-2-C-methyl-D-erythritol 2-phosphate = 2-C-methyl-D-erythritol 2,4-cyclic diphosphate + CMP</text>
        <dbReference type="Rhea" id="RHEA:23864"/>
        <dbReference type="ChEBI" id="CHEBI:57919"/>
        <dbReference type="ChEBI" id="CHEBI:58483"/>
        <dbReference type="ChEBI" id="CHEBI:60377"/>
        <dbReference type="EC" id="4.6.1.12"/>
    </reaction>
</comment>
<comment type="cofactor">
    <cofactor evidence="1">
        <name>a divalent metal cation</name>
        <dbReference type="ChEBI" id="CHEBI:60240"/>
    </cofactor>
    <text evidence="1">Binds 1 divalent metal cation per subunit.</text>
</comment>
<comment type="pathway">
    <text evidence="1">Isoprenoid biosynthesis; isopentenyl diphosphate biosynthesis via DXP pathway; isopentenyl diphosphate from 1-deoxy-D-xylulose 5-phosphate: step 4/6.</text>
</comment>
<comment type="subunit">
    <text evidence="1">Homotrimer.</text>
</comment>
<comment type="similarity">
    <text evidence="1">Belongs to the IspF family.</text>
</comment>
<protein>
    <recommendedName>
        <fullName evidence="1">2-C-methyl-D-erythritol 2,4-cyclodiphosphate synthase</fullName>
        <shortName evidence="1">MECDP-synthase</shortName>
        <shortName evidence="1">MECPP-synthase</shortName>
        <shortName evidence="1">MECPS</shortName>
        <ecNumber evidence="1">4.6.1.12</ecNumber>
    </recommendedName>
</protein>
<accession>B7MZ47</accession>
<organism>
    <name type="scientific">Escherichia coli O81 (strain ED1a)</name>
    <dbReference type="NCBI Taxonomy" id="585397"/>
    <lineage>
        <taxon>Bacteria</taxon>
        <taxon>Pseudomonadati</taxon>
        <taxon>Pseudomonadota</taxon>
        <taxon>Gammaproteobacteria</taxon>
        <taxon>Enterobacterales</taxon>
        <taxon>Enterobacteriaceae</taxon>
        <taxon>Escherichia</taxon>
    </lineage>
</organism>
<name>ISPF_ECO81</name>
<keyword id="KW-0414">Isoprene biosynthesis</keyword>
<keyword id="KW-0456">Lyase</keyword>
<keyword id="KW-0479">Metal-binding</keyword>
<feature type="chain" id="PRO_1000190709" description="2-C-methyl-D-erythritol 2,4-cyclodiphosphate synthase">
    <location>
        <begin position="1"/>
        <end position="159"/>
    </location>
</feature>
<feature type="binding site" evidence="1">
    <location>
        <begin position="8"/>
        <end position="10"/>
    </location>
    <ligand>
        <name>4-CDP-2-C-methyl-D-erythritol 2-phosphate</name>
        <dbReference type="ChEBI" id="CHEBI:57919"/>
    </ligand>
</feature>
<feature type="binding site" evidence="1">
    <location>
        <position position="8"/>
    </location>
    <ligand>
        <name>a divalent metal cation</name>
        <dbReference type="ChEBI" id="CHEBI:60240"/>
    </ligand>
</feature>
<feature type="binding site" evidence="1">
    <location>
        <position position="10"/>
    </location>
    <ligand>
        <name>a divalent metal cation</name>
        <dbReference type="ChEBI" id="CHEBI:60240"/>
    </ligand>
</feature>
<feature type="binding site" evidence="1">
    <location>
        <begin position="34"/>
        <end position="35"/>
    </location>
    <ligand>
        <name>4-CDP-2-C-methyl-D-erythritol 2-phosphate</name>
        <dbReference type="ChEBI" id="CHEBI:57919"/>
    </ligand>
</feature>
<feature type="binding site" evidence="1">
    <location>
        <position position="42"/>
    </location>
    <ligand>
        <name>a divalent metal cation</name>
        <dbReference type="ChEBI" id="CHEBI:60240"/>
    </ligand>
</feature>
<feature type="binding site" evidence="1">
    <location>
        <begin position="56"/>
        <end position="58"/>
    </location>
    <ligand>
        <name>4-CDP-2-C-methyl-D-erythritol 2-phosphate</name>
        <dbReference type="ChEBI" id="CHEBI:57919"/>
    </ligand>
</feature>
<feature type="binding site" evidence="1">
    <location>
        <begin position="61"/>
        <end position="65"/>
    </location>
    <ligand>
        <name>4-CDP-2-C-methyl-D-erythritol 2-phosphate</name>
        <dbReference type="ChEBI" id="CHEBI:57919"/>
    </ligand>
</feature>
<feature type="binding site" evidence="1">
    <location>
        <begin position="100"/>
        <end position="106"/>
    </location>
    <ligand>
        <name>4-CDP-2-C-methyl-D-erythritol 2-phosphate</name>
        <dbReference type="ChEBI" id="CHEBI:57919"/>
    </ligand>
</feature>
<feature type="binding site" evidence="1">
    <location>
        <begin position="132"/>
        <end position="135"/>
    </location>
    <ligand>
        <name>4-CDP-2-C-methyl-D-erythritol 2-phosphate</name>
        <dbReference type="ChEBI" id="CHEBI:57919"/>
    </ligand>
</feature>
<feature type="binding site" evidence="1">
    <location>
        <position position="139"/>
    </location>
    <ligand>
        <name>4-CDP-2-C-methyl-D-erythritol 2-phosphate</name>
        <dbReference type="ChEBI" id="CHEBI:57919"/>
    </ligand>
</feature>
<feature type="binding site" evidence="1">
    <location>
        <position position="142"/>
    </location>
    <ligand>
        <name>4-CDP-2-C-methyl-D-erythritol 2-phosphate</name>
        <dbReference type="ChEBI" id="CHEBI:57919"/>
    </ligand>
</feature>
<feature type="site" description="Transition state stabilizer" evidence="1">
    <location>
        <position position="34"/>
    </location>
</feature>
<feature type="site" description="Transition state stabilizer" evidence="1">
    <location>
        <position position="133"/>
    </location>
</feature>
<sequence>MRIGHGFDVHAFGGEGPIIIGGVRIPYEKGLLAHSDGDVALHALTDALLGAAALGDIGKLFPDTDPAFKGADSRELLREAWRRIQAKGYALGNVDVTIIAQAPKMLPHIPQMRVFIAEDLGCHMDDVNVKATTTEKLGFTGRGEGIACEAVALLIKATK</sequence>